<proteinExistence type="inferred from homology"/>
<evidence type="ECO:0000255" key="1">
    <source>
        <dbReference type="HAMAP-Rule" id="MF_00144"/>
    </source>
</evidence>
<feature type="chain" id="PRO_0000349666" description="tRNA-specific 2-thiouridylase MnmA">
    <location>
        <begin position="1"/>
        <end position="372"/>
    </location>
</feature>
<feature type="region of interest" description="Interaction with target base in tRNA" evidence="1">
    <location>
        <begin position="95"/>
        <end position="97"/>
    </location>
</feature>
<feature type="region of interest" description="Interaction with tRNA" evidence="1">
    <location>
        <begin position="151"/>
        <end position="153"/>
    </location>
</feature>
<feature type="region of interest" description="Interaction with tRNA" evidence="1">
    <location>
        <begin position="317"/>
        <end position="318"/>
    </location>
</feature>
<feature type="active site" description="Nucleophile" evidence="1">
    <location>
        <position position="100"/>
    </location>
</feature>
<feature type="active site" description="Cysteine persulfide intermediate" evidence="1">
    <location>
        <position position="201"/>
    </location>
</feature>
<feature type="binding site" evidence="1">
    <location>
        <begin position="9"/>
        <end position="16"/>
    </location>
    <ligand>
        <name>ATP</name>
        <dbReference type="ChEBI" id="CHEBI:30616"/>
    </ligand>
</feature>
<feature type="binding site" evidence="1">
    <location>
        <position position="35"/>
    </location>
    <ligand>
        <name>ATP</name>
        <dbReference type="ChEBI" id="CHEBI:30616"/>
    </ligand>
</feature>
<feature type="binding site" evidence="1">
    <location>
        <position position="124"/>
    </location>
    <ligand>
        <name>ATP</name>
        <dbReference type="ChEBI" id="CHEBI:30616"/>
    </ligand>
</feature>
<feature type="site" description="Interaction with tRNA" evidence="1">
    <location>
        <position position="125"/>
    </location>
</feature>
<feature type="site" description="Interaction with tRNA" evidence="1">
    <location>
        <position position="349"/>
    </location>
</feature>
<feature type="disulfide bond" description="Alternate" evidence="1">
    <location>
        <begin position="100"/>
        <end position="201"/>
    </location>
</feature>
<reference key="1">
    <citation type="journal article" date="2007" name="PLoS Genet.">
        <title>Genome analysis of Minibacterium massiliensis highlights the convergent evolution of water-living bacteria.</title>
        <authorList>
            <person name="Audic S."/>
            <person name="Robert C."/>
            <person name="Campagna B."/>
            <person name="Parinello H."/>
            <person name="Claverie J.-M."/>
            <person name="Raoult D."/>
            <person name="Drancourt M."/>
        </authorList>
    </citation>
    <scope>NUCLEOTIDE SEQUENCE [LARGE SCALE GENOMIC DNA]</scope>
    <source>
        <strain>Marseille</strain>
    </source>
</reference>
<protein>
    <recommendedName>
        <fullName evidence="1">tRNA-specific 2-thiouridylase MnmA</fullName>
        <ecNumber evidence="1">2.8.1.13</ecNumber>
    </recommendedName>
</protein>
<comment type="function">
    <text evidence="1">Catalyzes the 2-thiolation of uridine at the wobble position (U34) of tRNA, leading to the formation of s(2)U34.</text>
</comment>
<comment type="catalytic activity">
    <reaction evidence="1">
        <text>S-sulfanyl-L-cysteinyl-[protein] + uridine(34) in tRNA + AH2 + ATP = 2-thiouridine(34) in tRNA + L-cysteinyl-[protein] + A + AMP + diphosphate + H(+)</text>
        <dbReference type="Rhea" id="RHEA:47032"/>
        <dbReference type="Rhea" id="RHEA-COMP:10131"/>
        <dbReference type="Rhea" id="RHEA-COMP:11726"/>
        <dbReference type="Rhea" id="RHEA-COMP:11727"/>
        <dbReference type="Rhea" id="RHEA-COMP:11728"/>
        <dbReference type="ChEBI" id="CHEBI:13193"/>
        <dbReference type="ChEBI" id="CHEBI:15378"/>
        <dbReference type="ChEBI" id="CHEBI:17499"/>
        <dbReference type="ChEBI" id="CHEBI:29950"/>
        <dbReference type="ChEBI" id="CHEBI:30616"/>
        <dbReference type="ChEBI" id="CHEBI:33019"/>
        <dbReference type="ChEBI" id="CHEBI:61963"/>
        <dbReference type="ChEBI" id="CHEBI:65315"/>
        <dbReference type="ChEBI" id="CHEBI:87170"/>
        <dbReference type="ChEBI" id="CHEBI:456215"/>
        <dbReference type="EC" id="2.8.1.13"/>
    </reaction>
</comment>
<comment type="subcellular location">
    <subcellularLocation>
        <location evidence="1">Cytoplasm</location>
    </subcellularLocation>
</comment>
<comment type="similarity">
    <text evidence="1">Belongs to the MnmA/TRMU family.</text>
</comment>
<dbReference type="EC" id="2.8.1.13" evidence="1"/>
<dbReference type="EMBL" id="CP000269">
    <property type="protein sequence ID" value="ABR89509.1"/>
    <property type="molecule type" value="Genomic_DNA"/>
</dbReference>
<dbReference type="RefSeq" id="WP_012078238.1">
    <property type="nucleotide sequence ID" value="NC_009659.1"/>
</dbReference>
<dbReference type="SMR" id="A6SUW6"/>
<dbReference type="STRING" id="375286.mma_0373"/>
<dbReference type="KEGG" id="mms:mma_0373"/>
<dbReference type="eggNOG" id="COG0482">
    <property type="taxonomic scope" value="Bacteria"/>
</dbReference>
<dbReference type="HOGENOM" id="CLU_035188_1_0_4"/>
<dbReference type="OrthoDB" id="9800696at2"/>
<dbReference type="Proteomes" id="UP000006388">
    <property type="component" value="Chromosome"/>
</dbReference>
<dbReference type="GO" id="GO:0005737">
    <property type="term" value="C:cytoplasm"/>
    <property type="evidence" value="ECO:0007669"/>
    <property type="project" value="UniProtKB-SubCell"/>
</dbReference>
<dbReference type="GO" id="GO:0005524">
    <property type="term" value="F:ATP binding"/>
    <property type="evidence" value="ECO:0007669"/>
    <property type="project" value="UniProtKB-KW"/>
</dbReference>
<dbReference type="GO" id="GO:0000049">
    <property type="term" value="F:tRNA binding"/>
    <property type="evidence" value="ECO:0007669"/>
    <property type="project" value="UniProtKB-KW"/>
</dbReference>
<dbReference type="GO" id="GO:0103016">
    <property type="term" value="F:tRNA-uridine 2-sulfurtransferase activity"/>
    <property type="evidence" value="ECO:0007669"/>
    <property type="project" value="UniProtKB-EC"/>
</dbReference>
<dbReference type="GO" id="GO:0002143">
    <property type="term" value="P:tRNA wobble position uridine thiolation"/>
    <property type="evidence" value="ECO:0007669"/>
    <property type="project" value="TreeGrafter"/>
</dbReference>
<dbReference type="CDD" id="cd01998">
    <property type="entry name" value="MnmA_TRMU-like"/>
    <property type="match status" value="1"/>
</dbReference>
<dbReference type="FunFam" id="2.30.30.280:FF:000001">
    <property type="entry name" value="tRNA-specific 2-thiouridylase MnmA"/>
    <property type="match status" value="1"/>
</dbReference>
<dbReference type="FunFam" id="2.40.30.10:FF:000023">
    <property type="entry name" value="tRNA-specific 2-thiouridylase MnmA"/>
    <property type="match status" value="1"/>
</dbReference>
<dbReference type="FunFam" id="3.40.50.620:FF:000004">
    <property type="entry name" value="tRNA-specific 2-thiouridylase MnmA"/>
    <property type="match status" value="1"/>
</dbReference>
<dbReference type="Gene3D" id="2.30.30.280">
    <property type="entry name" value="Adenine nucleotide alpha hydrolases-like domains"/>
    <property type="match status" value="1"/>
</dbReference>
<dbReference type="Gene3D" id="3.40.50.620">
    <property type="entry name" value="HUPs"/>
    <property type="match status" value="1"/>
</dbReference>
<dbReference type="Gene3D" id="2.40.30.10">
    <property type="entry name" value="Translation factors"/>
    <property type="match status" value="1"/>
</dbReference>
<dbReference type="HAMAP" id="MF_00144">
    <property type="entry name" value="tRNA_thiouridyl_MnmA"/>
    <property type="match status" value="1"/>
</dbReference>
<dbReference type="InterPro" id="IPR004506">
    <property type="entry name" value="MnmA-like"/>
</dbReference>
<dbReference type="InterPro" id="IPR046885">
    <property type="entry name" value="MnmA-like_C"/>
</dbReference>
<dbReference type="InterPro" id="IPR046884">
    <property type="entry name" value="MnmA-like_central"/>
</dbReference>
<dbReference type="InterPro" id="IPR023382">
    <property type="entry name" value="MnmA-like_central_sf"/>
</dbReference>
<dbReference type="InterPro" id="IPR014729">
    <property type="entry name" value="Rossmann-like_a/b/a_fold"/>
</dbReference>
<dbReference type="NCBIfam" id="NF001138">
    <property type="entry name" value="PRK00143.1"/>
    <property type="match status" value="1"/>
</dbReference>
<dbReference type="NCBIfam" id="TIGR00420">
    <property type="entry name" value="trmU"/>
    <property type="match status" value="1"/>
</dbReference>
<dbReference type="PANTHER" id="PTHR11933:SF5">
    <property type="entry name" value="MITOCHONDRIAL TRNA-SPECIFIC 2-THIOURIDYLASE 1"/>
    <property type="match status" value="1"/>
</dbReference>
<dbReference type="PANTHER" id="PTHR11933">
    <property type="entry name" value="TRNA 5-METHYLAMINOMETHYL-2-THIOURIDYLATE -METHYLTRANSFERASE"/>
    <property type="match status" value="1"/>
</dbReference>
<dbReference type="Pfam" id="PF03054">
    <property type="entry name" value="tRNA_Me_trans"/>
    <property type="match status" value="1"/>
</dbReference>
<dbReference type="Pfam" id="PF20258">
    <property type="entry name" value="tRNA_Me_trans_C"/>
    <property type="match status" value="1"/>
</dbReference>
<dbReference type="Pfam" id="PF20259">
    <property type="entry name" value="tRNA_Me_trans_M"/>
    <property type="match status" value="1"/>
</dbReference>
<dbReference type="SUPFAM" id="SSF52402">
    <property type="entry name" value="Adenine nucleotide alpha hydrolases-like"/>
    <property type="match status" value="1"/>
</dbReference>
<sequence>MAKKRVVIGMSGGVDSSVSAWLLKEQGYEVIGLFMKNWEDDDDSEYCSTRQDWIDAASVADVVGVDIEAVNFASEYKDRVFAEFLREYQAGRTPNPDVLCNAEIKFKAFLDHAMLLGADMIATGHYARVREVTSGPDAGRVELLKAVDASKDQSYFLHRLNQAQLAKTLFPLGEIRKTEVRKIAEQLKLPNATKKDSTGICFIGERPFREFLNRYLSYQPGPMKTPEGVIVGEHVGLSFYTLGQRKGIGLGGMKSHKNTDGNSEPWYVARKDVATNTLYIVQGHDHPWLLSSELSAGQMSWVAGSPPSEELVSAKTRYRQADVACSQRSDADGFSLAFAAPQWAVTPGQSAVLYQGDVCLGGGIINTSAVPA</sequence>
<organism>
    <name type="scientific">Janthinobacterium sp. (strain Marseille)</name>
    <name type="common">Minibacterium massiliensis</name>
    <dbReference type="NCBI Taxonomy" id="375286"/>
    <lineage>
        <taxon>Bacteria</taxon>
        <taxon>Pseudomonadati</taxon>
        <taxon>Pseudomonadota</taxon>
        <taxon>Betaproteobacteria</taxon>
        <taxon>Burkholderiales</taxon>
        <taxon>Oxalobacteraceae</taxon>
        <taxon>Janthinobacterium</taxon>
    </lineage>
</organism>
<name>MNMA_JANMA</name>
<accession>A6SUW6</accession>
<gene>
    <name evidence="1" type="primary">mnmA</name>
    <name type="ordered locus">mma_0373</name>
</gene>
<keyword id="KW-0067">ATP-binding</keyword>
<keyword id="KW-0963">Cytoplasm</keyword>
<keyword id="KW-1015">Disulfide bond</keyword>
<keyword id="KW-0547">Nucleotide-binding</keyword>
<keyword id="KW-0694">RNA-binding</keyword>
<keyword id="KW-0808">Transferase</keyword>
<keyword id="KW-0819">tRNA processing</keyword>
<keyword id="KW-0820">tRNA-binding</keyword>